<proteinExistence type="evidence at transcript level"/>
<keyword id="KW-0106">Calcium</keyword>
<keyword id="KW-1015">Disulfide bond</keyword>
<keyword id="KW-0325">Glycoprotein</keyword>
<keyword id="KW-0349">Heme</keyword>
<keyword id="KW-0376">Hydrogen peroxide</keyword>
<keyword id="KW-0408">Iron</keyword>
<keyword id="KW-0479">Metal-binding</keyword>
<keyword id="KW-0560">Oxidoreductase</keyword>
<keyword id="KW-0575">Peroxidase</keyword>
<keyword id="KW-1185">Reference proteome</keyword>
<keyword id="KW-0964">Secreted</keyword>
<keyword id="KW-0732">Signal</keyword>
<sequence length="344" mass="38237">MNTKTVKSMAGIVLSQISLVALFPLCICYQTHQSTSSVASLSPQFYENSCPNAQAIVQSYVANAYFNDPRMAASILRLHFHDCFVNGCDASVLLDSSGTMESEKRSNANRDSARGFEVIDEIKSALENECPETVSCADLLALVARDSIVICGGPSWEVYLGRRDAREASLIGSMENIPSPESTLQTILTMFNFQGLDLTDLVALLGSHTIGNSRCIGFRQRLYNHTGNNDPDQTLNQDYASMLQQGCPISGNDQNLFNLDYVTPTKFDNYYYKNLVNFRGLLSSDEILFTQSIETMEMVKYYAENEGAFFEQFAKSMVKMGNISPLTGTDGEIRRICRRVNHDV</sequence>
<dbReference type="EC" id="1.11.1.7"/>
<dbReference type="EMBL" id="AL132980">
    <property type="protein sequence ID" value="CAB62621.1"/>
    <property type="status" value="ALT_INIT"/>
    <property type="molecule type" value="Genomic_DNA"/>
</dbReference>
<dbReference type="EMBL" id="CP002686">
    <property type="protein sequence ID" value="AEE78735.1"/>
    <property type="molecule type" value="Genomic_DNA"/>
</dbReference>
<dbReference type="EMBL" id="AK229843">
    <property type="protein sequence ID" value="BAF01672.1"/>
    <property type="molecule type" value="mRNA"/>
</dbReference>
<dbReference type="EMBL" id="AK229896">
    <property type="protein sequence ID" value="BAF01724.1"/>
    <property type="molecule type" value="mRNA"/>
</dbReference>
<dbReference type="EMBL" id="AK229990">
    <property type="protein sequence ID" value="BAF01814.1"/>
    <property type="molecule type" value="mRNA"/>
</dbReference>
<dbReference type="EMBL" id="AK230084">
    <property type="protein sequence ID" value="BAF01904.1"/>
    <property type="molecule type" value="mRNA"/>
</dbReference>
<dbReference type="EMBL" id="BT010535">
    <property type="protein sequence ID" value="AAQ65158.1"/>
    <property type="molecule type" value="mRNA"/>
</dbReference>
<dbReference type="PIR" id="T45730">
    <property type="entry name" value="T45730"/>
</dbReference>
<dbReference type="RefSeq" id="NP_190668.2">
    <property type="nucleotide sequence ID" value="NM_114959.3"/>
</dbReference>
<dbReference type="SMR" id="Q9SD46"/>
<dbReference type="FunCoup" id="Q9SD46">
    <property type="interactions" value="127"/>
</dbReference>
<dbReference type="STRING" id="3702.Q9SD46"/>
<dbReference type="PeroxiBase" id="202">
    <property type="entry name" value="AtPrx36"/>
</dbReference>
<dbReference type="GlyCosmos" id="Q9SD46">
    <property type="glycosylation" value="1 site, No reported glycans"/>
</dbReference>
<dbReference type="GlyGen" id="Q9SD46">
    <property type="glycosylation" value="1 site"/>
</dbReference>
<dbReference type="PaxDb" id="3702-AT3G50990.1"/>
<dbReference type="ProteomicsDB" id="234829"/>
<dbReference type="EnsemblPlants" id="AT3G50990.1">
    <property type="protein sequence ID" value="AT3G50990.1"/>
    <property type="gene ID" value="AT3G50990"/>
</dbReference>
<dbReference type="GeneID" id="824263"/>
<dbReference type="Gramene" id="AT3G50990.1">
    <property type="protein sequence ID" value="AT3G50990.1"/>
    <property type="gene ID" value="AT3G50990"/>
</dbReference>
<dbReference type="KEGG" id="ath:AT3G50990"/>
<dbReference type="Araport" id="AT3G50990"/>
<dbReference type="TAIR" id="AT3G50990">
    <property type="gene designation" value="PER36"/>
</dbReference>
<dbReference type="eggNOG" id="ENOG502QR5A">
    <property type="taxonomic scope" value="Eukaryota"/>
</dbReference>
<dbReference type="HOGENOM" id="CLU_010543_0_1_1"/>
<dbReference type="InParanoid" id="Q9SD46"/>
<dbReference type="OMA" id="NECPETV"/>
<dbReference type="PhylomeDB" id="Q9SD46"/>
<dbReference type="BioCyc" id="ARA:AT3G50990-MONOMER"/>
<dbReference type="PRO" id="PR:Q9SD46"/>
<dbReference type="Proteomes" id="UP000006548">
    <property type="component" value="Chromosome 3"/>
</dbReference>
<dbReference type="ExpressionAtlas" id="Q9SD46">
    <property type="expression patterns" value="baseline and differential"/>
</dbReference>
<dbReference type="GO" id="GO:0005576">
    <property type="term" value="C:extracellular region"/>
    <property type="evidence" value="ECO:0007669"/>
    <property type="project" value="UniProtKB-SubCell"/>
</dbReference>
<dbReference type="GO" id="GO:0009505">
    <property type="term" value="C:plant-type cell wall"/>
    <property type="evidence" value="ECO:0000314"/>
    <property type="project" value="TAIR"/>
</dbReference>
<dbReference type="GO" id="GO:0020037">
    <property type="term" value="F:heme binding"/>
    <property type="evidence" value="ECO:0007669"/>
    <property type="project" value="InterPro"/>
</dbReference>
<dbReference type="GO" id="GO:0140825">
    <property type="term" value="F:lactoperoxidase activity"/>
    <property type="evidence" value="ECO:0007669"/>
    <property type="project" value="UniProtKB-EC"/>
</dbReference>
<dbReference type="GO" id="GO:0046872">
    <property type="term" value="F:metal ion binding"/>
    <property type="evidence" value="ECO:0007669"/>
    <property type="project" value="UniProtKB-KW"/>
</dbReference>
<dbReference type="GO" id="GO:0004601">
    <property type="term" value="F:peroxidase activity"/>
    <property type="evidence" value="ECO:0000314"/>
    <property type="project" value="TAIR"/>
</dbReference>
<dbReference type="GO" id="GO:0044347">
    <property type="term" value="P:cell wall polysaccharide catabolic process"/>
    <property type="evidence" value="ECO:0000315"/>
    <property type="project" value="TAIR"/>
</dbReference>
<dbReference type="GO" id="GO:0042744">
    <property type="term" value="P:hydrogen peroxide catabolic process"/>
    <property type="evidence" value="ECO:0007669"/>
    <property type="project" value="UniProtKB-KW"/>
</dbReference>
<dbReference type="GO" id="GO:0080001">
    <property type="term" value="P:mucilage extrusion from seed coat"/>
    <property type="evidence" value="ECO:0000315"/>
    <property type="project" value="TAIR"/>
</dbReference>
<dbReference type="GO" id="GO:0009827">
    <property type="term" value="P:plant-type cell wall modification"/>
    <property type="evidence" value="ECO:0000315"/>
    <property type="project" value="TAIR"/>
</dbReference>
<dbReference type="GO" id="GO:0006979">
    <property type="term" value="P:response to oxidative stress"/>
    <property type="evidence" value="ECO:0007669"/>
    <property type="project" value="InterPro"/>
</dbReference>
<dbReference type="CDD" id="cd00693">
    <property type="entry name" value="secretory_peroxidase"/>
    <property type="match status" value="1"/>
</dbReference>
<dbReference type="FunFam" id="1.10.420.10:FF:000001">
    <property type="entry name" value="Peroxidase"/>
    <property type="match status" value="1"/>
</dbReference>
<dbReference type="FunFam" id="1.10.520.10:FF:000001">
    <property type="entry name" value="Peroxidase"/>
    <property type="match status" value="1"/>
</dbReference>
<dbReference type="Gene3D" id="1.10.520.10">
    <property type="match status" value="1"/>
</dbReference>
<dbReference type="Gene3D" id="1.10.420.10">
    <property type="entry name" value="Peroxidase, domain 2"/>
    <property type="match status" value="1"/>
</dbReference>
<dbReference type="InterPro" id="IPR002016">
    <property type="entry name" value="Haem_peroxidase"/>
</dbReference>
<dbReference type="InterPro" id="IPR010255">
    <property type="entry name" value="Haem_peroxidase_sf"/>
</dbReference>
<dbReference type="InterPro" id="IPR000823">
    <property type="entry name" value="Peroxidase_pln"/>
</dbReference>
<dbReference type="InterPro" id="IPR019794">
    <property type="entry name" value="Peroxidases_AS"/>
</dbReference>
<dbReference type="InterPro" id="IPR019793">
    <property type="entry name" value="Peroxidases_heam-ligand_BS"/>
</dbReference>
<dbReference type="InterPro" id="IPR033905">
    <property type="entry name" value="Secretory_peroxidase"/>
</dbReference>
<dbReference type="PANTHER" id="PTHR31388:SF178">
    <property type="entry name" value="PEROXIDASE 36"/>
    <property type="match status" value="1"/>
</dbReference>
<dbReference type="PANTHER" id="PTHR31388">
    <property type="entry name" value="PEROXIDASE 72-RELATED"/>
    <property type="match status" value="1"/>
</dbReference>
<dbReference type="Pfam" id="PF00141">
    <property type="entry name" value="peroxidase"/>
    <property type="match status" value="1"/>
</dbReference>
<dbReference type="PRINTS" id="PR00458">
    <property type="entry name" value="PEROXIDASE"/>
</dbReference>
<dbReference type="PRINTS" id="PR00461">
    <property type="entry name" value="PLPEROXIDASE"/>
</dbReference>
<dbReference type="SUPFAM" id="SSF48113">
    <property type="entry name" value="Heme-dependent peroxidases"/>
    <property type="match status" value="1"/>
</dbReference>
<dbReference type="PROSITE" id="PS00435">
    <property type="entry name" value="PEROXIDASE_1"/>
    <property type="match status" value="1"/>
</dbReference>
<dbReference type="PROSITE" id="PS00436">
    <property type="entry name" value="PEROXIDASE_2"/>
    <property type="match status" value="1"/>
</dbReference>
<dbReference type="PROSITE" id="PS50873">
    <property type="entry name" value="PEROXIDASE_4"/>
    <property type="match status" value="1"/>
</dbReference>
<gene>
    <name type="primary">PER36</name>
    <name type="synonym">P36</name>
    <name type="ordered locus">At3g50990</name>
    <name type="ORF">F24M12.30</name>
</gene>
<organism>
    <name type="scientific">Arabidopsis thaliana</name>
    <name type="common">Mouse-ear cress</name>
    <dbReference type="NCBI Taxonomy" id="3702"/>
    <lineage>
        <taxon>Eukaryota</taxon>
        <taxon>Viridiplantae</taxon>
        <taxon>Streptophyta</taxon>
        <taxon>Embryophyta</taxon>
        <taxon>Tracheophyta</taxon>
        <taxon>Spermatophyta</taxon>
        <taxon>Magnoliopsida</taxon>
        <taxon>eudicotyledons</taxon>
        <taxon>Gunneridae</taxon>
        <taxon>Pentapetalae</taxon>
        <taxon>rosids</taxon>
        <taxon>malvids</taxon>
        <taxon>Brassicales</taxon>
        <taxon>Brassicaceae</taxon>
        <taxon>Camelineae</taxon>
        <taxon>Arabidopsis</taxon>
    </lineage>
</organism>
<protein>
    <recommendedName>
        <fullName>Peroxidase 36</fullName>
        <shortName>Atperox P36</shortName>
        <ecNumber>1.11.1.7</ecNumber>
    </recommendedName>
</protein>
<feature type="signal peptide" evidence="1">
    <location>
        <begin position="1"/>
        <end position="28"/>
    </location>
</feature>
<feature type="chain" id="PRO_0000023702" description="Peroxidase 36">
    <location>
        <begin position="29"/>
        <end position="344"/>
    </location>
</feature>
<feature type="active site" description="Proton acceptor" evidence="2 3">
    <location>
        <position position="81"/>
    </location>
</feature>
<feature type="binding site" evidence="2">
    <location>
        <position position="82"/>
    </location>
    <ligand>
        <name>Ca(2+)</name>
        <dbReference type="ChEBI" id="CHEBI:29108"/>
        <label>1</label>
    </ligand>
</feature>
<feature type="binding site" evidence="2">
    <location>
        <position position="85"/>
    </location>
    <ligand>
        <name>Ca(2+)</name>
        <dbReference type="ChEBI" id="CHEBI:29108"/>
        <label>1</label>
    </ligand>
</feature>
<feature type="binding site" evidence="2">
    <location>
        <position position="87"/>
    </location>
    <ligand>
        <name>Ca(2+)</name>
        <dbReference type="ChEBI" id="CHEBI:29108"/>
        <label>1</label>
    </ligand>
</feature>
<feature type="binding site" evidence="2">
    <location>
        <position position="89"/>
    </location>
    <ligand>
        <name>Ca(2+)</name>
        <dbReference type="ChEBI" id="CHEBI:29108"/>
        <label>1</label>
    </ligand>
</feature>
<feature type="binding site" evidence="2">
    <location>
        <position position="91"/>
    </location>
    <ligand>
        <name>Ca(2+)</name>
        <dbReference type="ChEBI" id="CHEBI:29108"/>
        <label>1</label>
    </ligand>
</feature>
<feature type="binding site" evidence="2">
    <location>
        <position position="178"/>
    </location>
    <ligand>
        <name>substrate</name>
    </ligand>
</feature>
<feature type="binding site" description="axial binding residue" evidence="2">
    <location>
        <position position="208"/>
    </location>
    <ligand>
        <name>heme b</name>
        <dbReference type="ChEBI" id="CHEBI:60344"/>
    </ligand>
    <ligandPart>
        <name>Fe</name>
        <dbReference type="ChEBI" id="CHEBI:18248"/>
    </ligandPart>
</feature>
<feature type="binding site" evidence="2">
    <location>
        <position position="209"/>
    </location>
    <ligand>
        <name>Ca(2+)</name>
        <dbReference type="ChEBI" id="CHEBI:29108"/>
        <label>2</label>
    </ligand>
</feature>
<feature type="binding site" evidence="2">
    <location>
        <position position="260"/>
    </location>
    <ligand>
        <name>Ca(2+)</name>
        <dbReference type="ChEBI" id="CHEBI:29108"/>
        <label>2</label>
    </ligand>
</feature>
<feature type="binding site" evidence="2">
    <location>
        <position position="263"/>
    </location>
    <ligand>
        <name>Ca(2+)</name>
        <dbReference type="ChEBI" id="CHEBI:29108"/>
        <label>2</label>
    </ligand>
</feature>
<feature type="binding site" evidence="2">
    <location>
        <position position="268"/>
    </location>
    <ligand>
        <name>Ca(2+)</name>
        <dbReference type="ChEBI" id="CHEBI:29108"/>
        <label>2</label>
    </ligand>
</feature>
<feature type="site" description="Transition state stabilizer" evidence="2">
    <location>
        <position position="77"/>
    </location>
</feature>
<feature type="glycosylation site" description="N-linked (GlcNAc...) asparagine" evidence="1">
    <location>
        <position position="224"/>
    </location>
</feature>
<feature type="disulfide bond" evidence="2">
    <location>
        <begin position="50"/>
        <end position="130"/>
    </location>
</feature>
<feature type="disulfide bond" evidence="2">
    <location>
        <begin position="83"/>
        <end position="88"/>
    </location>
</feature>
<feature type="disulfide bond" evidence="2">
    <location>
        <begin position="136"/>
        <end position="337"/>
    </location>
</feature>
<feature type="disulfide bond" evidence="2">
    <location>
        <begin position="215"/>
        <end position="247"/>
    </location>
</feature>
<evidence type="ECO:0000255" key="1"/>
<evidence type="ECO:0000255" key="2">
    <source>
        <dbReference type="PROSITE-ProRule" id="PRU00297"/>
    </source>
</evidence>
<evidence type="ECO:0000255" key="3">
    <source>
        <dbReference type="PROSITE-ProRule" id="PRU10012"/>
    </source>
</evidence>
<evidence type="ECO:0000305" key="4"/>
<reference key="1">
    <citation type="journal article" date="2000" name="Nature">
        <title>Sequence and analysis of chromosome 3 of the plant Arabidopsis thaliana.</title>
        <authorList>
            <person name="Salanoubat M."/>
            <person name="Lemcke K."/>
            <person name="Rieger M."/>
            <person name="Ansorge W."/>
            <person name="Unseld M."/>
            <person name="Fartmann B."/>
            <person name="Valle G."/>
            <person name="Bloecker H."/>
            <person name="Perez-Alonso M."/>
            <person name="Obermaier B."/>
            <person name="Delseny M."/>
            <person name="Boutry M."/>
            <person name="Grivell L.A."/>
            <person name="Mache R."/>
            <person name="Puigdomenech P."/>
            <person name="De Simone V."/>
            <person name="Choisne N."/>
            <person name="Artiguenave F."/>
            <person name="Robert C."/>
            <person name="Brottier P."/>
            <person name="Wincker P."/>
            <person name="Cattolico L."/>
            <person name="Weissenbach J."/>
            <person name="Saurin W."/>
            <person name="Quetier F."/>
            <person name="Schaefer M."/>
            <person name="Mueller-Auer S."/>
            <person name="Gabel C."/>
            <person name="Fuchs M."/>
            <person name="Benes V."/>
            <person name="Wurmbach E."/>
            <person name="Drzonek H."/>
            <person name="Erfle H."/>
            <person name="Jordan N."/>
            <person name="Bangert S."/>
            <person name="Wiedelmann R."/>
            <person name="Kranz H."/>
            <person name="Voss H."/>
            <person name="Holland R."/>
            <person name="Brandt P."/>
            <person name="Nyakatura G."/>
            <person name="Vezzi A."/>
            <person name="D'Angelo M."/>
            <person name="Pallavicini A."/>
            <person name="Toppo S."/>
            <person name="Simionati B."/>
            <person name="Conrad A."/>
            <person name="Hornischer K."/>
            <person name="Kauer G."/>
            <person name="Loehnert T.-H."/>
            <person name="Nordsiek G."/>
            <person name="Reichelt J."/>
            <person name="Scharfe M."/>
            <person name="Schoen O."/>
            <person name="Bargues M."/>
            <person name="Terol J."/>
            <person name="Climent J."/>
            <person name="Navarro P."/>
            <person name="Collado C."/>
            <person name="Perez-Perez A."/>
            <person name="Ottenwaelder B."/>
            <person name="Duchemin D."/>
            <person name="Cooke R."/>
            <person name="Laudie M."/>
            <person name="Berger-Llauro C."/>
            <person name="Purnelle B."/>
            <person name="Masuy D."/>
            <person name="de Haan M."/>
            <person name="Maarse A.C."/>
            <person name="Alcaraz J.-P."/>
            <person name="Cottet A."/>
            <person name="Casacuberta E."/>
            <person name="Monfort A."/>
            <person name="Argiriou A."/>
            <person name="Flores M."/>
            <person name="Liguori R."/>
            <person name="Vitale D."/>
            <person name="Mannhaupt G."/>
            <person name="Haase D."/>
            <person name="Schoof H."/>
            <person name="Rudd S."/>
            <person name="Zaccaria P."/>
            <person name="Mewes H.-W."/>
            <person name="Mayer K.F.X."/>
            <person name="Kaul S."/>
            <person name="Town C.D."/>
            <person name="Koo H.L."/>
            <person name="Tallon L.J."/>
            <person name="Jenkins J."/>
            <person name="Rooney T."/>
            <person name="Rizzo M."/>
            <person name="Walts A."/>
            <person name="Utterback T."/>
            <person name="Fujii C.Y."/>
            <person name="Shea T.P."/>
            <person name="Creasy T.H."/>
            <person name="Haas B."/>
            <person name="Maiti R."/>
            <person name="Wu D."/>
            <person name="Peterson J."/>
            <person name="Van Aken S."/>
            <person name="Pai G."/>
            <person name="Militscher J."/>
            <person name="Sellers P."/>
            <person name="Gill J.E."/>
            <person name="Feldblyum T.V."/>
            <person name="Preuss D."/>
            <person name="Lin X."/>
            <person name="Nierman W.C."/>
            <person name="Salzberg S.L."/>
            <person name="White O."/>
            <person name="Venter J.C."/>
            <person name="Fraser C.M."/>
            <person name="Kaneko T."/>
            <person name="Nakamura Y."/>
            <person name="Sato S."/>
            <person name="Kato T."/>
            <person name="Asamizu E."/>
            <person name="Sasamoto S."/>
            <person name="Kimura T."/>
            <person name="Idesawa K."/>
            <person name="Kawashima K."/>
            <person name="Kishida Y."/>
            <person name="Kiyokawa C."/>
            <person name="Kohara M."/>
            <person name="Matsumoto M."/>
            <person name="Matsuno A."/>
            <person name="Muraki A."/>
            <person name="Nakayama S."/>
            <person name="Nakazaki N."/>
            <person name="Shinpo S."/>
            <person name="Takeuchi C."/>
            <person name="Wada T."/>
            <person name="Watanabe A."/>
            <person name="Yamada M."/>
            <person name="Yasuda M."/>
            <person name="Tabata S."/>
        </authorList>
    </citation>
    <scope>NUCLEOTIDE SEQUENCE [LARGE SCALE GENOMIC DNA]</scope>
    <source>
        <strain>cv. Columbia</strain>
    </source>
</reference>
<reference key="2">
    <citation type="journal article" date="2017" name="Plant J.">
        <title>Araport11: a complete reannotation of the Arabidopsis thaliana reference genome.</title>
        <authorList>
            <person name="Cheng C.Y."/>
            <person name="Krishnakumar V."/>
            <person name="Chan A.P."/>
            <person name="Thibaud-Nissen F."/>
            <person name="Schobel S."/>
            <person name="Town C.D."/>
        </authorList>
    </citation>
    <scope>GENOME REANNOTATION</scope>
    <source>
        <strain>cv. Columbia</strain>
    </source>
</reference>
<reference key="3">
    <citation type="submission" date="2006-07" db="EMBL/GenBank/DDBJ databases">
        <title>Large-scale analysis of RIKEN Arabidopsis full-length (RAFL) cDNAs.</title>
        <authorList>
            <person name="Totoki Y."/>
            <person name="Seki M."/>
            <person name="Ishida J."/>
            <person name="Nakajima M."/>
            <person name="Enju A."/>
            <person name="Kamiya A."/>
            <person name="Narusaka M."/>
            <person name="Shin-i T."/>
            <person name="Nakagawa M."/>
            <person name="Sakamoto N."/>
            <person name="Oishi K."/>
            <person name="Kohara Y."/>
            <person name="Kobayashi M."/>
            <person name="Toyoda A."/>
            <person name="Sakaki Y."/>
            <person name="Sakurai T."/>
            <person name="Iida K."/>
            <person name="Akiyama K."/>
            <person name="Satou M."/>
            <person name="Toyoda T."/>
            <person name="Konagaya A."/>
            <person name="Carninci P."/>
            <person name="Kawai J."/>
            <person name="Hayashizaki Y."/>
            <person name="Shinozaki K."/>
        </authorList>
    </citation>
    <scope>NUCLEOTIDE SEQUENCE [LARGE SCALE MRNA]</scope>
    <source>
        <strain>cv. Columbia</strain>
    </source>
</reference>
<reference key="4">
    <citation type="journal article" date="2003" name="Science">
        <title>Empirical analysis of transcriptional activity in the Arabidopsis genome.</title>
        <authorList>
            <person name="Yamada K."/>
            <person name="Lim J."/>
            <person name="Dale J.M."/>
            <person name="Chen H."/>
            <person name="Shinn P."/>
            <person name="Palm C.J."/>
            <person name="Southwick A.M."/>
            <person name="Wu H.C."/>
            <person name="Kim C.J."/>
            <person name="Nguyen M."/>
            <person name="Pham P.K."/>
            <person name="Cheuk R.F."/>
            <person name="Karlin-Newmann G."/>
            <person name="Liu S.X."/>
            <person name="Lam B."/>
            <person name="Sakano H."/>
            <person name="Wu T."/>
            <person name="Yu G."/>
            <person name="Miranda M."/>
            <person name="Quach H.L."/>
            <person name="Tripp M."/>
            <person name="Chang C.H."/>
            <person name="Lee J.M."/>
            <person name="Toriumi M.J."/>
            <person name="Chan M.M."/>
            <person name="Tang C.C."/>
            <person name="Onodera C.S."/>
            <person name="Deng J.M."/>
            <person name="Akiyama K."/>
            <person name="Ansari Y."/>
            <person name="Arakawa T."/>
            <person name="Banh J."/>
            <person name="Banno F."/>
            <person name="Bowser L."/>
            <person name="Brooks S.Y."/>
            <person name="Carninci P."/>
            <person name="Chao Q."/>
            <person name="Choy N."/>
            <person name="Enju A."/>
            <person name="Goldsmith A.D."/>
            <person name="Gurjal M."/>
            <person name="Hansen N.F."/>
            <person name="Hayashizaki Y."/>
            <person name="Johnson-Hopson C."/>
            <person name="Hsuan V.W."/>
            <person name="Iida K."/>
            <person name="Karnes M."/>
            <person name="Khan S."/>
            <person name="Koesema E."/>
            <person name="Ishida J."/>
            <person name="Jiang P.X."/>
            <person name="Jones T."/>
            <person name="Kawai J."/>
            <person name="Kamiya A."/>
            <person name="Meyers C."/>
            <person name="Nakajima M."/>
            <person name="Narusaka M."/>
            <person name="Seki M."/>
            <person name="Sakurai T."/>
            <person name="Satou M."/>
            <person name="Tamse R."/>
            <person name="Vaysberg M."/>
            <person name="Wallender E.K."/>
            <person name="Wong C."/>
            <person name="Yamamura Y."/>
            <person name="Yuan S."/>
            <person name="Shinozaki K."/>
            <person name="Davis R.W."/>
            <person name="Theologis A."/>
            <person name="Ecker J.R."/>
        </authorList>
    </citation>
    <scope>NUCLEOTIDE SEQUENCE [LARGE SCALE MRNA] OF 9-344</scope>
    <source>
        <strain>cv. Columbia</strain>
    </source>
</reference>
<reference key="5">
    <citation type="journal article" date="2002" name="Gene">
        <title>Analysis and expression of the class III peroxidase large gene family in Arabidopsis thaliana.</title>
        <authorList>
            <person name="Tognolli M."/>
            <person name="Penel C."/>
            <person name="Greppin H."/>
            <person name="Simon P."/>
        </authorList>
    </citation>
    <scope>GENE FAMILY ORGANIZATION</scope>
    <scope>NOMENCLATURE</scope>
    <source>
        <strain>cv. Columbia</strain>
    </source>
</reference>
<name>PER36_ARATH</name>
<accession>Q9SD46</accession>
<accession>Q0WLV3</accession>
<comment type="function">
    <text>Removal of H(2)O(2), oxidation of toxic reductants, biosynthesis and degradation of lignin, suberization, auxin catabolism, response to environmental stresses such as wounding, pathogen attack and oxidative stress. These functions might be dependent on each isozyme/isoform in each plant tissue.</text>
</comment>
<comment type="catalytic activity">
    <reaction>
        <text>2 a phenolic donor + H2O2 = 2 a phenolic radical donor + 2 H2O</text>
        <dbReference type="Rhea" id="RHEA:56136"/>
        <dbReference type="ChEBI" id="CHEBI:15377"/>
        <dbReference type="ChEBI" id="CHEBI:16240"/>
        <dbReference type="ChEBI" id="CHEBI:139520"/>
        <dbReference type="ChEBI" id="CHEBI:139521"/>
        <dbReference type="EC" id="1.11.1.7"/>
    </reaction>
</comment>
<comment type="cofactor">
    <cofactor evidence="2">
        <name>heme b</name>
        <dbReference type="ChEBI" id="CHEBI:60344"/>
    </cofactor>
    <text evidence="2">Binds 1 heme b (iron(II)-protoporphyrin IX) group per subunit.</text>
</comment>
<comment type="cofactor">
    <cofactor evidence="2">
        <name>Ca(2+)</name>
        <dbReference type="ChEBI" id="CHEBI:29108"/>
    </cofactor>
    <text evidence="2">Binds 2 calcium ions per subunit.</text>
</comment>
<comment type="subcellular location">
    <subcellularLocation>
        <location evidence="2">Secreted</location>
    </subcellularLocation>
</comment>
<comment type="miscellaneous">
    <text>There are 73 peroxidase genes in A.thaliana.</text>
</comment>
<comment type="similarity">
    <text evidence="2">Belongs to the peroxidase family. Classical plant (class III) peroxidase subfamily.</text>
</comment>
<comment type="sequence caution" evidence="4">
    <conflict type="erroneous initiation">
        <sequence resource="EMBL-CDS" id="CAB62621"/>
    </conflict>
</comment>